<keyword id="KW-0030">Aminoacyl-tRNA synthetase</keyword>
<keyword id="KW-0067">ATP-binding</keyword>
<keyword id="KW-0963">Cytoplasm</keyword>
<keyword id="KW-0436">Ligase</keyword>
<keyword id="KW-0547">Nucleotide-binding</keyword>
<keyword id="KW-0648">Protein biosynthesis</keyword>
<keyword id="KW-1185">Reference proteome</keyword>
<evidence type="ECO:0000255" key="1">
    <source>
        <dbReference type="HAMAP-Rule" id="MF_00022"/>
    </source>
</evidence>
<organism>
    <name type="scientific">Dinoroseobacter shibae (strain DSM 16493 / NCIMB 14021 / DFL 12)</name>
    <dbReference type="NCBI Taxonomy" id="398580"/>
    <lineage>
        <taxon>Bacteria</taxon>
        <taxon>Pseudomonadati</taxon>
        <taxon>Pseudomonadota</taxon>
        <taxon>Alphaproteobacteria</taxon>
        <taxon>Rhodobacterales</taxon>
        <taxon>Roseobacteraceae</taxon>
        <taxon>Dinoroseobacter</taxon>
    </lineage>
</organism>
<reference key="1">
    <citation type="journal article" date="2010" name="ISME J.">
        <title>The complete genome sequence of the algal symbiont Dinoroseobacter shibae: a hitchhiker's guide to life in the sea.</title>
        <authorList>
            <person name="Wagner-Dobler I."/>
            <person name="Ballhausen B."/>
            <person name="Berger M."/>
            <person name="Brinkhoff T."/>
            <person name="Buchholz I."/>
            <person name="Bunk B."/>
            <person name="Cypionka H."/>
            <person name="Daniel R."/>
            <person name="Drepper T."/>
            <person name="Gerdts G."/>
            <person name="Hahnke S."/>
            <person name="Han C."/>
            <person name="Jahn D."/>
            <person name="Kalhoefer D."/>
            <person name="Kiss H."/>
            <person name="Klenk H.P."/>
            <person name="Kyrpides N."/>
            <person name="Liebl W."/>
            <person name="Liesegang H."/>
            <person name="Meincke L."/>
            <person name="Pati A."/>
            <person name="Petersen J."/>
            <person name="Piekarski T."/>
            <person name="Pommerenke C."/>
            <person name="Pradella S."/>
            <person name="Pukall R."/>
            <person name="Rabus R."/>
            <person name="Stackebrandt E."/>
            <person name="Thole S."/>
            <person name="Thompson L."/>
            <person name="Tielen P."/>
            <person name="Tomasch J."/>
            <person name="von Jan M."/>
            <person name="Wanphrut N."/>
            <person name="Wichels A."/>
            <person name="Zech H."/>
            <person name="Simon M."/>
        </authorList>
    </citation>
    <scope>NUCLEOTIDE SEQUENCE [LARGE SCALE GENOMIC DNA]</scope>
    <source>
        <strain>DSM 16493 / NCIMB 14021 / DFL 12</strain>
    </source>
</reference>
<name>SYE1_DINSH</name>
<dbReference type="EC" id="6.1.1.17" evidence="1"/>
<dbReference type="EMBL" id="CP000830">
    <property type="protein sequence ID" value="ABV93547.1"/>
    <property type="molecule type" value="Genomic_DNA"/>
</dbReference>
<dbReference type="RefSeq" id="WP_012178477.1">
    <property type="nucleotide sequence ID" value="NC_009952.1"/>
</dbReference>
<dbReference type="SMR" id="A8LMK2"/>
<dbReference type="STRING" id="398580.Dshi_1805"/>
<dbReference type="KEGG" id="dsh:Dshi_1805"/>
<dbReference type="eggNOG" id="COG0008">
    <property type="taxonomic scope" value="Bacteria"/>
</dbReference>
<dbReference type="HOGENOM" id="CLU_015768_6_0_5"/>
<dbReference type="OrthoDB" id="9807503at2"/>
<dbReference type="Proteomes" id="UP000006833">
    <property type="component" value="Chromosome"/>
</dbReference>
<dbReference type="GO" id="GO:0005829">
    <property type="term" value="C:cytosol"/>
    <property type="evidence" value="ECO:0007669"/>
    <property type="project" value="TreeGrafter"/>
</dbReference>
<dbReference type="GO" id="GO:0005524">
    <property type="term" value="F:ATP binding"/>
    <property type="evidence" value="ECO:0007669"/>
    <property type="project" value="UniProtKB-UniRule"/>
</dbReference>
<dbReference type="GO" id="GO:0004818">
    <property type="term" value="F:glutamate-tRNA ligase activity"/>
    <property type="evidence" value="ECO:0007669"/>
    <property type="project" value="UniProtKB-UniRule"/>
</dbReference>
<dbReference type="GO" id="GO:0000049">
    <property type="term" value="F:tRNA binding"/>
    <property type="evidence" value="ECO:0007669"/>
    <property type="project" value="InterPro"/>
</dbReference>
<dbReference type="GO" id="GO:0008270">
    <property type="term" value="F:zinc ion binding"/>
    <property type="evidence" value="ECO:0007669"/>
    <property type="project" value="InterPro"/>
</dbReference>
<dbReference type="GO" id="GO:0006424">
    <property type="term" value="P:glutamyl-tRNA aminoacylation"/>
    <property type="evidence" value="ECO:0007669"/>
    <property type="project" value="UniProtKB-UniRule"/>
</dbReference>
<dbReference type="CDD" id="cd00808">
    <property type="entry name" value="GluRS_core"/>
    <property type="match status" value="1"/>
</dbReference>
<dbReference type="FunFam" id="3.40.50.620:FF:000007">
    <property type="entry name" value="Glutamate--tRNA ligase"/>
    <property type="match status" value="1"/>
</dbReference>
<dbReference type="Gene3D" id="1.10.10.350">
    <property type="match status" value="1"/>
</dbReference>
<dbReference type="Gene3D" id="3.40.50.620">
    <property type="entry name" value="HUPs"/>
    <property type="match status" value="1"/>
</dbReference>
<dbReference type="HAMAP" id="MF_00022">
    <property type="entry name" value="Glu_tRNA_synth_type1"/>
    <property type="match status" value="1"/>
</dbReference>
<dbReference type="InterPro" id="IPR045462">
    <property type="entry name" value="aa-tRNA-synth_I_cd-bd"/>
</dbReference>
<dbReference type="InterPro" id="IPR020751">
    <property type="entry name" value="aa-tRNA-synth_I_codon-bd_sub2"/>
</dbReference>
<dbReference type="InterPro" id="IPR001412">
    <property type="entry name" value="aa-tRNA-synth_I_CS"/>
</dbReference>
<dbReference type="InterPro" id="IPR008925">
    <property type="entry name" value="aa_tRNA-synth_I_cd-bd_sf"/>
</dbReference>
<dbReference type="InterPro" id="IPR004527">
    <property type="entry name" value="Glu-tRNA-ligase_bac/mito"/>
</dbReference>
<dbReference type="InterPro" id="IPR000924">
    <property type="entry name" value="Glu/Gln-tRNA-synth"/>
</dbReference>
<dbReference type="InterPro" id="IPR020058">
    <property type="entry name" value="Glu/Gln-tRNA-synth_Ib_cat-dom"/>
</dbReference>
<dbReference type="InterPro" id="IPR049940">
    <property type="entry name" value="GluQ/Sye"/>
</dbReference>
<dbReference type="InterPro" id="IPR033910">
    <property type="entry name" value="GluRS_core"/>
</dbReference>
<dbReference type="InterPro" id="IPR014729">
    <property type="entry name" value="Rossmann-like_a/b/a_fold"/>
</dbReference>
<dbReference type="NCBIfam" id="TIGR00464">
    <property type="entry name" value="gltX_bact"/>
    <property type="match status" value="1"/>
</dbReference>
<dbReference type="PANTHER" id="PTHR43311">
    <property type="entry name" value="GLUTAMATE--TRNA LIGASE"/>
    <property type="match status" value="1"/>
</dbReference>
<dbReference type="PANTHER" id="PTHR43311:SF2">
    <property type="entry name" value="GLUTAMATE--TRNA LIGASE, MITOCHONDRIAL-RELATED"/>
    <property type="match status" value="1"/>
</dbReference>
<dbReference type="Pfam" id="PF19269">
    <property type="entry name" value="Anticodon_2"/>
    <property type="match status" value="1"/>
</dbReference>
<dbReference type="Pfam" id="PF00749">
    <property type="entry name" value="tRNA-synt_1c"/>
    <property type="match status" value="1"/>
</dbReference>
<dbReference type="PRINTS" id="PR00987">
    <property type="entry name" value="TRNASYNTHGLU"/>
</dbReference>
<dbReference type="SUPFAM" id="SSF48163">
    <property type="entry name" value="An anticodon-binding domain of class I aminoacyl-tRNA synthetases"/>
    <property type="match status" value="1"/>
</dbReference>
<dbReference type="SUPFAM" id="SSF52374">
    <property type="entry name" value="Nucleotidylyl transferase"/>
    <property type="match status" value="1"/>
</dbReference>
<dbReference type="PROSITE" id="PS00178">
    <property type="entry name" value="AA_TRNA_LIGASE_I"/>
    <property type="match status" value="1"/>
</dbReference>
<protein>
    <recommendedName>
        <fullName evidence="1">Glutamate--tRNA ligase 1</fullName>
        <ecNumber evidence="1">6.1.1.17</ecNumber>
    </recommendedName>
    <alternativeName>
        <fullName evidence="1">Glutamyl-tRNA synthetase 1</fullName>
        <shortName evidence="1">GluRS 1</shortName>
    </alternativeName>
</protein>
<gene>
    <name evidence="1" type="primary">gltX1</name>
    <name type="ordered locus">Dshi_1805</name>
</gene>
<feature type="chain" id="PRO_0000330969" description="Glutamate--tRNA ligase 1">
    <location>
        <begin position="1"/>
        <end position="471"/>
    </location>
</feature>
<feature type="short sequence motif" description="'HIGH' region" evidence="1">
    <location>
        <begin position="15"/>
        <end position="25"/>
    </location>
</feature>
<feature type="short sequence motif" description="'KMSKS' region" evidence="1">
    <location>
        <begin position="243"/>
        <end position="247"/>
    </location>
</feature>
<feature type="binding site" evidence="1">
    <location>
        <position position="246"/>
    </location>
    <ligand>
        <name>ATP</name>
        <dbReference type="ChEBI" id="CHEBI:30616"/>
    </ligand>
</feature>
<sequence length="471" mass="50893">MSPTDASPVVTRFAPSPTGYLHIGGARTALFNWLYARGRGGKFLLRIEDTDKARSTAEATEAIFAGLRWLGLDWDGDAVSQAEGAARHAQVARALQEAGKAYKCFTTQDEIAAFREAARAEGRSTLFRSPWRDADPASHPDAPYVIRIKAPQEGTTVIADQVQGDVRIRNDQLDDMILLRSDGSPVYMLAVVVDDHDMGVTHVIRGDDHLNNAARQMMIYDAMGWDMPVFAHIPLIHGPDGKKLSKRHGALGVEEYQAMGYPAQAMRNYLARLGWSHGDDEFFGDAQAQAWFDLDGIGKSPARLDLKKLDNLSGQHLGVMADEAIVAGAQGYLAATGAPPLTEAQETGLSRAMYCLKDRAKKFPDLLEKAHFILASRPIDPDPKAAKSLDTVSRGILAELTPQLQNASWTRDTLEGVVGGLAEAHGLGLGKLAAPLRAALAGRSATPSVFDMMLVLGRDETLARLSDATSA</sequence>
<accession>A8LMK2</accession>
<proteinExistence type="inferred from homology"/>
<comment type="function">
    <text evidence="1">Catalyzes the attachment of glutamate to tRNA(Glu) in a two-step reaction: glutamate is first activated by ATP to form Glu-AMP and then transferred to the acceptor end of tRNA(Glu).</text>
</comment>
<comment type="catalytic activity">
    <reaction evidence="1">
        <text>tRNA(Glu) + L-glutamate + ATP = L-glutamyl-tRNA(Glu) + AMP + diphosphate</text>
        <dbReference type="Rhea" id="RHEA:23540"/>
        <dbReference type="Rhea" id="RHEA-COMP:9663"/>
        <dbReference type="Rhea" id="RHEA-COMP:9680"/>
        <dbReference type="ChEBI" id="CHEBI:29985"/>
        <dbReference type="ChEBI" id="CHEBI:30616"/>
        <dbReference type="ChEBI" id="CHEBI:33019"/>
        <dbReference type="ChEBI" id="CHEBI:78442"/>
        <dbReference type="ChEBI" id="CHEBI:78520"/>
        <dbReference type="ChEBI" id="CHEBI:456215"/>
        <dbReference type="EC" id="6.1.1.17"/>
    </reaction>
</comment>
<comment type="subunit">
    <text evidence="1">Monomer.</text>
</comment>
<comment type="subcellular location">
    <subcellularLocation>
        <location evidence="1">Cytoplasm</location>
    </subcellularLocation>
</comment>
<comment type="similarity">
    <text evidence="1">Belongs to the class-I aminoacyl-tRNA synthetase family. Glutamate--tRNA ligase type 1 subfamily.</text>
</comment>